<protein>
    <recommendedName>
        <fullName evidence="1">DNA mismatch repair protein MutS</fullName>
    </recommendedName>
</protein>
<dbReference type="EMBL" id="CP001186">
    <property type="protein sequence ID" value="ACK95391.1"/>
    <property type="molecule type" value="Genomic_DNA"/>
</dbReference>
<dbReference type="RefSeq" id="WP_000195991.1">
    <property type="nucleotide sequence ID" value="NC_011772.1"/>
</dbReference>
<dbReference type="SMR" id="B7ITM1"/>
<dbReference type="KEGG" id="bcg:BCG9842_B1431"/>
<dbReference type="HOGENOM" id="CLU_002472_3_2_9"/>
<dbReference type="Proteomes" id="UP000006744">
    <property type="component" value="Chromosome"/>
</dbReference>
<dbReference type="GO" id="GO:0005829">
    <property type="term" value="C:cytosol"/>
    <property type="evidence" value="ECO:0007669"/>
    <property type="project" value="TreeGrafter"/>
</dbReference>
<dbReference type="GO" id="GO:0005524">
    <property type="term" value="F:ATP binding"/>
    <property type="evidence" value="ECO:0007669"/>
    <property type="project" value="UniProtKB-UniRule"/>
</dbReference>
<dbReference type="GO" id="GO:0140664">
    <property type="term" value="F:ATP-dependent DNA damage sensor activity"/>
    <property type="evidence" value="ECO:0007669"/>
    <property type="project" value="InterPro"/>
</dbReference>
<dbReference type="GO" id="GO:0003684">
    <property type="term" value="F:damaged DNA binding"/>
    <property type="evidence" value="ECO:0007669"/>
    <property type="project" value="UniProtKB-UniRule"/>
</dbReference>
<dbReference type="GO" id="GO:0030983">
    <property type="term" value="F:mismatched DNA binding"/>
    <property type="evidence" value="ECO:0007669"/>
    <property type="project" value="InterPro"/>
</dbReference>
<dbReference type="GO" id="GO:0006298">
    <property type="term" value="P:mismatch repair"/>
    <property type="evidence" value="ECO:0007669"/>
    <property type="project" value="UniProtKB-UniRule"/>
</dbReference>
<dbReference type="CDD" id="cd03284">
    <property type="entry name" value="ABC_MutS1"/>
    <property type="match status" value="1"/>
</dbReference>
<dbReference type="FunFam" id="1.10.1420.10:FF:000007">
    <property type="entry name" value="DNA mismatch repair protein MutS"/>
    <property type="match status" value="1"/>
</dbReference>
<dbReference type="FunFam" id="3.30.420.110:FF:000007">
    <property type="entry name" value="DNA mismatch repair protein MutS"/>
    <property type="match status" value="1"/>
</dbReference>
<dbReference type="FunFam" id="3.40.1170.10:FF:000001">
    <property type="entry name" value="DNA mismatch repair protein MutS"/>
    <property type="match status" value="1"/>
</dbReference>
<dbReference type="FunFam" id="3.40.50.300:FF:000896">
    <property type="entry name" value="DNA mismatch repair protein MutS"/>
    <property type="match status" value="1"/>
</dbReference>
<dbReference type="Gene3D" id="1.10.1420.10">
    <property type="match status" value="2"/>
</dbReference>
<dbReference type="Gene3D" id="3.40.1170.10">
    <property type="entry name" value="DNA repair protein MutS, domain I"/>
    <property type="match status" value="1"/>
</dbReference>
<dbReference type="Gene3D" id="3.30.420.110">
    <property type="entry name" value="MutS, connector domain"/>
    <property type="match status" value="1"/>
</dbReference>
<dbReference type="Gene3D" id="3.40.50.300">
    <property type="entry name" value="P-loop containing nucleotide triphosphate hydrolases"/>
    <property type="match status" value="1"/>
</dbReference>
<dbReference type="HAMAP" id="MF_00096">
    <property type="entry name" value="MutS"/>
    <property type="match status" value="1"/>
</dbReference>
<dbReference type="InterPro" id="IPR005748">
    <property type="entry name" value="DNA_mismatch_repair_MutS"/>
</dbReference>
<dbReference type="InterPro" id="IPR007695">
    <property type="entry name" value="DNA_mismatch_repair_MutS-lik_N"/>
</dbReference>
<dbReference type="InterPro" id="IPR017261">
    <property type="entry name" value="DNA_mismatch_repair_MutS/MSH"/>
</dbReference>
<dbReference type="InterPro" id="IPR000432">
    <property type="entry name" value="DNA_mismatch_repair_MutS_C"/>
</dbReference>
<dbReference type="InterPro" id="IPR007861">
    <property type="entry name" value="DNA_mismatch_repair_MutS_clamp"/>
</dbReference>
<dbReference type="InterPro" id="IPR007696">
    <property type="entry name" value="DNA_mismatch_repair_MutS_core"/>
</dbReference>
<dbReference type="InterPro" id="IPR016151">
    <property type="entry name" value="DNA_mismatch_repair_MutS_N"/>
</dbReference>
<dbReference type="InterPro" id="IPR036187">
    <property type="entry name" value="DNA_mismatch_repair_MutS_sf"/>
</dbReference>
<dbReference type="InterPro" id="IPR007860">
    <property type="entry name" value="DNA_mmatch_repair_MutS_con_dom"/>
</dbReference>
<dbReference type="InterPro" id="IPR045076">
    <property type="entry name" value="MutS"/>
</dbReference>
<dbReference type="InterPro" id="IPR036678">
    <property type="entry name" value="MutS_con_dom_sf"/>
</dbReference>
<dbReference type="InterPro" id="IPR027417">
    <property type="entry name" value="P-loop_NTPase"/>
</dbReference>
<dbReference type="NCBIfam" id="TIGR01070">
    <property type="entry name" value="mutS1"/>
    <property type="match status" value="1"/>
</dbReference>
<dbReference type="NCBIfam" id="NF003810">
    <property type="entry name" value="PRK05399.1"/>
    <property type="match status" value="1"/>
</dbReference>
<dbReference type="PANTHER" id="PTHR11361:SF34">
    <property type="entry name" value="DNA MISMATCH REPAIR PROTEIN MSH1, MITOCHONDRIAL"/>
    <property type="match status" value="1"/>
</dbReference>
<dbReference type="PANTHER" id="PTHR11361">
    <property type="entry name" value="DNA MISMATCH REPAIR PROTEIN MUTS FAMILY MEMBER"/>
    <property type="match status" value="1"/>
</dbReference>
<dbReference type="Pfam" id="PF01624">
    <property type="entry name" value="MutS_I"/>
    <property type="match status" value="1"/>
</dbReference>
<dbReference type="Pfam" id="PF05188">
    <property type="entry name" value="MutS_II"/>
    <property type="match status" value="1"/>
</dbReference>
<dbReference type="Pfam" id="PF05192">
    <property type="entry name" value="MutS_III"/>
    <property type="match status" value="1"/>
</dbReference>
<dbReference type="Pfam" id="PF05190">
    <property type="entry name" value="MutS_IV"/>
    <property type="match status" value="1"/>
</dbReference>
<dbReference type="Pfam" id="PF00488">
    <property type="entry name" value="MutS_V"/>
    <property type="match status" value="1"/>
</dbReference>
<dbReference type="PIRSF" id="PIRSF037677">
    <property type="entry name" value="DNA_mis_repair_Msh6"/>
    <property type="match status" value="1"/>
</dbReference>
<dbReference type="SMART" id="SM00534">
    <property type="entry name" value="MUTSac"/>
    <property type="match status" value="1"/>
</dbReference>
<dbReference type="SMART" id="SM00533">
    <property type="entry name" value="MUTSd"/>
    <property type="match status" value="1"/>
</dbReference>
<dbReference type="SUPFAM" id="SSF55271">
    <property type="entry name" value="DNA repair protein MutS, domain I"/>
    <property type="match status" value="1"/>
</dbReference>
<dbReference type="SUPFAM" id="SSF53150">
    <property type="entry name" value="DNA repair protein MutS, domain II"/>
    <property type="match status" value="1"/>
</dbReference>
<dbReference type="SUPFAM" id="SSF48334">
    <property type="entry name" value="DNA repair protein MutS, domain III"/>
    <property type="match status" value="1"/>
</dbReference>
<dbReference type="SUPFAM" id="SSF52540">
    <property type="entry name" value="P-loop containing nucleoside triphosphate hydrolases"/>
    <property type="match status" value="1"/>
</dbReference>
<dbReference type="PROSITE" id="PS00486">
    <property type="entry name" value="DNA_MISMATCH_REPAIR_2"/>
    <property type="match status" value="1"/>
</dbReference>
<comment type="function">
    <text evidence="1">This protein is involved in the repair of mismatches in DNA. It is possible that it carries out the mismatch recognition step. This protein has a weak ATPase activity.</text>
</comment>
<comment type="similarity">
    <text evidence="1">Belongs to the DNA mismatch repair MutS family.</text>
</comment>
<keyword id="KW-0067">ATP-binding</keyword>
<keyword id="KW-0227">DNA damage</keyword>
<keyword id="KW-0234">DNA repair</keyword>
<keyword id="KW-0238">DNA-binding</keyword>
<keyword id="KW-0547">Nucleotide-binding</keyword>
<evidence type="ECO:0000255" key="1">
    <source>
        <dbReference type="HAMAP-Rule" id="MF_00096"/>
    </source>
</evidence>
<gene>
    <name evidence="1" type="primary">mutS</name>
    <name type="ordered locus">BCG9842_B1431</name>
</gene>
<name>MUTS_BACC2</name>
<feature type="chain" id="PRO_1000117278" description="DNA mismatch repair protein MutS">
    <location>
        <begin position="1"/>
        <end position="892"/>
    </location>
</feature>
<feature type="binding site" evidence="1">
    <location>
        <begin position="607"/>
        <end position="614"/>
    </location>
    <ligand>
        <name>ATP</name>
        <dbReference type="ChEBI" id="CHEBI:30616"/>
    </ligand>
</feature>
<proteinExistence type="inferred from homology"/>
<reference key="1">
    <citation type="submission" date="2008-10" db="EMBL/GenBank/DDBJ databases">
        <title>Genome sequence of Bacillus cereus G9842.</title>
        <authorList>
            <person name="Dodson R.J."/>
            <person name="Durkin A.S."/>
            <person name="Rosovitz M.J."/>
            <person name="Rasko D.A."/>
            <person name="Hoffmaster A."/>
            <person name="Ravel J."/>
            <person name="Sutton G."/>
        </authorList>
    </citation>
    <scope>NUCLEOTIDE SEQUENCE [LARGE SCALE GENOMIC DNA]</scope>
    <source>
        <strain>G9842</strain>
    </source>
</reference>
<accession>B7ITM1</accession>
<organism>
    <name type="scientific">Bacillus cereus (strain G9842)</name>
    <dbReference type="NCBI Taxonomy" id="405531"/>
    <lineage>
        <taxon>Bacteria</taxon>
        <taxon>Bacillati</taxon>
        <taxon>Bacillota</taxon>
        <taxon>Bacilli</taxon>
        <taxon>Bacillales</taxon>
        <taxon>Bacillaceae</taxon>
        <taxon>Bacillus</taxon>
        <taxon>Bacillus cereus group</taxon>
    </lineage>
</organism>
<sequence length="892" mass="101041">MTQYTPMIQQYLKVKADYQDAFLFFRLGDFYEMFFEDAVKAAHELEITLTSRDGGSSDRIPMCGVPHHAAKNYIEQLVEKGYKVAVCEQVEDPKTAKGVVRREVVQLITPGTMMEGRTIDEKENNFLAALTHFEDGSYALACNDLTTGQNTVTLLTGSVEDILLEVYATGSKEIVVDSSFSKDELNKLTETLKMTISYEDATAIPEGLEHLVKNVSQAKLIKAIGRLFNYVIRTQKRSLDHLQPVEIYYTNQFMKIDVHSKRNLELTETLRTKEKTGSLLWLLDKTKTAMGGRMLKQWMERPLIQKEKVEERLEMVETFVNDYFLREDLKEKLKEVYDLERLAGKVAFGNVNARDLLQLRRSLLQVPAILEAISLLDNAYAARLIQGADPCESLTELLGRSIQENPPLSIKDGDIIKDGYNDKLDQYRYVSKNGKTWIAELEKRERDITGVKSLKIGYNRIFGYYIEVTKANLAALPEGRYERKQTLANAERFITDELKEKETLILEAEEKIVQLEYDLFTALREEVKVFIPKLQHLAKVISELDVLQSFATVSEEEQFVKPVLTTKREIFIKDGRHPVVEKVLNGKLYVPNDCIMPEKMDVFLITGPNMSGKSTYMRQLALVTVMSQIGCFVPATEAVLPVFDQIFTRIGAADDLISGQSTFMVEMLEAKNAIANASERSLILFDEIGRGTSTYDGMALAQAIIEHIHDQIGAKTLFSTHYHELTVLEESLDQLKNVHVSAIEENGKVVFLHKIQDGAADKSYGIHVAQLAELPDSLIARAKEVLAQLEGQEEIIIPKRVEVKVQEQEVIPEPVVVKEEPVEVLEAKVETEEESQLSFFGGEQSSKKQDKLALNQKETAVLAQIKKIDLLDMTPLEAMNELYRLQKKLKKG</sequence>